<evidence type="ECO:0000255" key="1">
    <source>
        <dbReference type="HAMAP-Rule" id="MF_01369"/>
    </source>
</evidence>
<evidence type="ECO:0000305" key="2"/>
<accession>A5N4P9</accession>
<proteinExistence type="inferred from homology"/>
<reference key="1">
    <citation type="journal article" date="2008" name="Proc. Natl. Acad. Sci. U.S.A.">
        <title>The genome of Clostridium kluyveri, a strict anaerobe with unique metabolic features.</title>
        <authorList>
            <person name="Seedorf H."/>
            <person name="Fricke W.F."/>
            <person name="Veith B."/>
            <person name="Brueggemann H."/>
            <person name="Liesegang H."/>
            <person name="Strittmatter A."/>
            <person name="Miethke M."/>
            <person name="Buckel W."/>
            <person name="Hinderberger J."/>
            <person name="Li F."/>
            <person name="Hagemeier C."/>
            <person name="Thauer R.K."/>
            <person name="Gottschalk G."/>
        </authorList>
    </citation>
    <scope>NUCLEOTIDE SEQUENCE [LARGE SCALE GENOMIC DNA]</scope>
    <source>
        <strain>ATCC 8527 / DSM 555 / NBRC 12016 / NCIMB 10680 / K1</strain>
    </source>
</reference>
<keyword id="KW-1185">Reference proteome</keyword>
<keyword id="KW-0687">Ribonucleoprotein</keyword>
<keyword id="KW-0689">Ribosomal protein</keyword>
<keyword id="KW-0694">RNA-binding</keyword>
<keyword id="KW-0699">rRNA-binding</keyword>
<sequence>MKYTNYDIIRRPVITEKSMGAMNEKKYTFIVDIRANKSMIKRAIEDVFGVTVETVNTSRYKGKKKRVGVHIGKRPDYKKAIVKLTEESKTIEFFEGIQ</sequence>
<gene>
    <name evidence="1" type="primary">rplW</name>
    <name type="ordered locus">CKL_0226</name>
</gene>
<organism>
    <name type="scientific">Clostridium kluyveri (strain ATCC 8527 / DSM 555 / NBRC 12016 / NCIMB 10680 / K1)</name>
    <dbReference type="NCBI Taxonomy" id="431943"/>
    <lineage>
        <taxon>Bacteria</taxon>
        <taxon>Bacillati</taxon>
        <taxon>Bacillota</taxon>
        <taxon>Clostridia</taxon>
        <taxon>Eubacteriales</taxon>
        <taxon>Clostridiaceae</taxon>
        <taxon>Clostridium</taxon>
    </lineage>
</organism>
<dbReference type="EMBL" id="CP000673">
    <property type="protein sequence ID" value="EDK32280.1"/>
    <property type="molecule type" value="Genomic_DNA"/>
</dbReference>
<dbReference type="RefSeq" id="WP_011988805.1">
    <property type="nucleotide sequence ID" value="NC_009706.1"/>
</dbReference>
<dbReference type="SMR" id="A5N4P9"/>
<dbReference type="STRING" id="431943.CKL_0226"/>
<dbReference type="KEGG" id="ckl:CKL_0226"/>
<dbReference type="eggNOG" id="COG0089">
    <property type="taxonomic scope" value="Bacteria"/>
</dbReference>
<dbReference type="HOGENOM" id="CLU_037562_3_2_9"/>
<dbReference type="Proteomes" id="UP000002411">
    <property type="component" value="Chromosome"/>
</dbReference>
<dbReference type="GO" id="GO:1990904">
    <property type="term" value="C:ribonucleoprotein complex"/>
    <property type="evidence" value="ECO:0007669"/>
    <property type="project" value="UniProtKB-KW"/>
</dbReference>
<dbReference type="GO" id="GO:0005840">
    <property type="term" value="C:ribosome"/>
    <property type="evidence" value="ECO:0007669"/>
    <property type="project" value="UniProtKB-KW"/>
</dbReference>
<dbReference type="GO" id="GO:0019843">
    <property type="term" value="F:rRNA binding"/>
    <property type="evidence" value="ECO:0007669"/>
    <property type="project" value="UniProtKB-UniRule"/>
</dbReference>
<dbReference type="GO" id="GO:0003735">
    <property type="term" value="F:structural constituent of ribosome"/>
    <property type="evidence" value="ECO:0007669"/>
    <property type="project" value="InterPro"/>
</dbReference>
<dbReference type="GO" id="GO:0006412">
    <property type="term" value="P:translation"/>
    <property type="evidence" value="ECO:0007669"/>
    <property type="project" value="UniProtKB-UniRule"/>
</dbReference>
<dbReference type="FunFam" id="3.30.70.330:FF:000001">
    <property type="entry name" value="50S ribosomal protein L23"/>
    <property type="match status" value="1"/>
</dbReference>
<dbReference type="Gene3D" id="3.30.70.330">
    <property type="match status" value="1"/>
</dbReference>
<dbReference type="HAMAP" id="MF_01369_B">
    <property type="entry name" value="Ribosomal_uL23_B"/>
    <property type="match status" value="1"/>
</dbReference>
<dbReference type="InterPro" id="IPR012677">
    <property type="entry name" value="Nucleotide-bd_a/b_plait_sf"/>
</dbReference>
<dbReference type="InterPro" id="IPR013025">
    <property type="entry name" value="Ribosomal_uL23-like"/>
</dbReference>
<dbReference type="InterPro" id="IPR012678">
    <property type="entry name" value="Ribosomal_uL23/eL15/eS24_sf"/>
</dbReference>
<dbReference type="InterPro" id="IPR001014">
    <property type="entry name" value="Ribosomal_uL23_CS"/>
</dbReference>
<dbReference type="NCBIfam" id="NF004363">
    <property type="entry name" value="PRK05738.2-4"/>
    <property type="match status" value="1"/>
</dbReference>
<dbReference type="PANTHER" id="PTHR11620">
    <property type="entry name" value="60S RIBOSOMAL PROTEIN L23A"/>
    <property type="match status" value="1"/>
</dbReference>
<dbReference type="Pfam" id="PF00276">
    <property type="entry name" value="Ribosomal_L23"/>
    <property type="match status" value="1"/>
</dbReference>
<dbReference type="SUPFAM" id="SSF54189">
    <property type="entry name" value="Ribosomal proteins S24e, L23 and L15e"/>
    <property type="match status" value="1"/>
</dbReference>
<dbReference type="PROSITE" id="PS00050">
    <property type="entry name" value="RIBOSOMAL_L23"/>
    <property type="match status" value="1"/>
</dbReference>
<feature type="chain" id="PRO_1000087212" description="Large ribosomal subunit protein uL23">
    <location>
        <begin position="1"/>
        <end position="98"/>
    </location>
</feature>
<comment type="function">
    <text evidence="1">One of the early assembly proteins it binds 23S rRNA. One of the proteins that surrounds the polypeptide exit tunnel on the outside of the ribosome. Forms the main docking site for trigger factor binding to the ribosome.</text>
</comment>
<comment type="subunit">
    <text evidence="1">Part of the 50S ribosomal subunit. Contacts protein L29, and trigger factor when it is bound to the ribosome.</text>
</comment>
<comment type="similarity">
    <text evidence="1">Belongs to the universal ribosomal protein uL23 family.</text>
</comment>
<name>RL23_CLOK5</name>
<protein>
    <recommendedName>
        <fullName evidence="1">Large ribosomal subunit protein uL23</fullName>
    </recommendedName>
    <alternativeName>
        <fullName evidence="2">50S ribosomal protein L23</fullName>
    </alternativeName>
</protein>